<organism>
    <name type="scientific">Bos taurus</name>
    <name type="common">Bovine</name>
    <dbReference type="NCBI Taxonomy" id="9913"/>
    <lineage>
        <taxon>Eukaryota</taxon>
        <taxon>Metazoa</taxon>
        <taxon>Chordata</taxon>
        <taxon>Craniata</taxon>
        <taxon>Vertebrata</taxon>
        <taxon>Euteleostomi</taxon>
        <taxon>Mammalia</taxon>
        <taxon>Eutheria</taxon>
        <taxon>Laurasiatheria</taxon>
        <taxon>Artiodactyla</taxon>
        <taxon>Ruminantia</taxon>
        <taxon>Pecora</taxon>
        <taxon>Bovidae</taxon>
        <taxon>Bovinae</taxon>
        <taxon>Bos</taxon>
    </lineage>
</organism>
<proteinExistence type="evidence at transcript level"/>
<protein>
    <recommendedName>
        <fullName evidence="3">Ras-related GTP-binding protein A</fullName>
        <shortName evidence="1">Rag A</shortName>
        <shortName evidence="1">RagA</shortName>
        <ecNumber evidence="1">3.6.5.-</ecNumber>
    </recommendedName>
</protein>
<name>RRAGA_BOVIN</name>
<accession>Q3SX43</accession>
<sequence>MPNTAMKKKVLLMGKSGSGKTSMRSIIFANYIARDTRRLGATIDVEHSHVRFLGNLVLNLWDCGGQDTFMENYFTSQRDNIFRNVEVLIYVFDVESRELEKDMHYYQSCLEAILQNSPDAKIFCLVHKMDLVQEDQRDLIFKEREEDLRRLSRPLECACFRTSIWDETLYKAWSSIVYQLIPNVQQLEMNLRNFAQIIEADEVLLFERATFLVISHYQCKEQRDVHRFEKISNIIKQFKLSCSKLAASFQSMEVRNSNFAAFIDIFTSNTYVMVVMSDPSIPSAATLINIRNARKHFEKLERVDGPKHSLLMR</sequence>
<gene>
    <name evidence="1" type="primary">RRAGA</name>
</gene>
<reference key="1">
    <citation type="submission" date="2005-09" db="EMBL/GenBank/DDBJ databases">
        <authorList>
            <consortium name="NIH - Mammalian Gene Collection (MGC) project"/>
        </authorList>
    </citation>
    <scope>NUCLEOTIDE SEQUENCE [LARGE SCALE MRNA]</scope>
    <source>
        <strain>Hereford</strain>
        <tissue>Uterus</tissue>
    </source>
</reference>
<keyword id="KW-0053">Apoptosis</keyword>
<keyword id="KW-0963">Cytoplasm</keyword>
<keyword id="KW-0342">GTP-binding</keyword>
<keyword id="KW-0378">Hydrolase</keyword>
<keyword id="KW-1017">Isopeptide bond</keyword>
<keyword id="KW-0458">Lysosome</keyword>
<keyword id="KW-0472">Membrane</keyword>
<keyword id="KW-0547">Nucleotide-binding</keyword>
<keyword id="KW-0539">Nucleus</keyword>
<keyword id="KW-0597">Phosphoprotein</keyword>
<keyword id="KW-1185">Reference proteome</keyword>
<keyword id="KW-0832">Ubl conjugation</keyword>
<feature type="chain" id="PRO_0000326555" description="Ras-related GTP-binding protein A">
    <location>
        <begin position="1"/>
        <end position="313"/>
    </location>
</feature>
<feature type="binding site" evidence="1">
    <location>
        <position position="16"/>
    </location>
    <ligand>
        <name>GTP</name>
        <dbReference type="ChEBI" id="CHEBI:37565"/>
    </ligand>
</feature>
<feature type="binding site" evidence="1">
    <location>
        <position position="17"/>
    </location>
    <ligand>
        <name>GDP</name>
        <dbReference type="ChEBI" id="CHEBI:58189"/>
    </ligand>
</feature>
<feature type="binding site" evidence="1">
    <location>
        <position position="17"/>
    </location>
    <ligand>
        <name>GTP</name>
        <dbReference type="ChEBI" id="CHEBI:37565"/>
    </ligand>
</feature>
<feature type="binding site" evidence="1">
    <location>
        <position position="19"/>
    </location>
    <ligand>
        <name>GDP</name>
        <dbReference type="ChEBI" id="CHEBI:58189"/>
    </ligand>
</feature>
<feature type="binding site" evidence="1">
    <location>
        <position position="19"/>
    </location>
    <ligand>
        <name>GTP</name>
        <dbReference type="ChEBI" id="CHEBI:37565"/>
    </ligand>
</feature>
<feature type="binding site" evidence="1">
    <location>
        <position position="20"/>
    </location>
    <ligand>
        <name>GDP</name>
        <dbReference type="ChEBI" id="CHEBI:58189"/>
    </ligand>
</feature>
<feature type="binding site" evidence="1">
    <location>
        <position position="20"/>
    </location>
    <ligand>
        <name>GTP</name>
        <dbReference type="ChEBI" id="CHEBI:37565"/>
    </ligand>
</feature>
<feature type="binding site" evidence="1">
    <location>
        <position position="21"/>
    </location>
    <ligand>
        <name>GDP</name>
        <dbReference type="ChEBI" id="CHEBI:58189"/>
    </ligand>
</feature>
<feature type="binding site" evidence="1">
    <location>
        <position position="21"/>
    </location>
    <ligand>
        <name>GTP</name>
        <dbReference type="ChEBI" id="CHEBI:37565"/>
    </ligand>
</feature>
<feature type="binding site" evidence="1">
    <location>
        <position position="22"/>
    </location>
    <ligand>
        <name>GDP</name>
        <dbReference type="ChEBI" id="CHEBI:58189"/>
    </ligand>
</feature>
<feature type="binding site" evidence="1">
    <location>
        <position position="22"/>
    </location>
    <ligand>
        <name>GTP</name>
        <dbReference type="ChEBI" id="CHEBI:37565"/>
    </ligand>
</feature>
<feature type="binding site" evidence="1">
    <location>
        <position position="36"/>
    </location>
    <ligand>
        <name>GTP</name>
        <dbReference type="ChEBI" id="CHEBI:37565"/>
    </ligand>
</feature>
<feature type="binding site" evidence="1">
    <location>
        <position position="42"/>
    </location>
    <ligand>
        <name>GTP</name>
        <dbReference type="ChEBI" id="CHEBI:37565"/>
    </ligand>
</feature>
<feature type="binding site" evidence="1">
    <location>
        <position position="65"/>
    </location>
    <ligand>
        <name>GTP</name>
        <dbReference type="ChEBI" id="CHEBI:37565"/>
    </ligand>
</feature>
<feature type="binding site" evidence="1">
    <location>
        <position position="127"/>
    </location>
    <ligand>
        <name>GDP</name>
        <dbReference type="ChEBI" id="CHEBI:58189"/>
    </ligand>
</feature>
<feature type="binding site" evidence="1">
    <location>
        <position position="127"/>
    </location>
    <ligand>
        <name>GTP</name>
        <dbReference type="ChEBI" id="CHEBI:37565"/>
    </ligand>
</feature>
<feature type="binding site" evidence="1">
    <location>
        <position position="130"/>
    </location>
    <ligand>
        <name>GDP</name>
        <dbReference type="ChEBI" id="CHEBI:58189"/>
    </ligand>
</feature>
<feature type="binding site" evidence="1">
    <location>
        <position position="148"/>
    </location>
    <ligand>
        <name>GDP</name>
        <dbReference type="ChEBI" id="CHEBI:58189"/>
    </ligand>
</feature>
<feature type="binding site" evidence="1">
    <location>
        <position position="164"/>
    </location>
    <ligand>
        <name>GDP</name>
        <dbReference type="ChEBI" id="CHEBI:58189"/>
    </ligand>
</feature>
<feature type="binding site" evidence="1">
    <location>
        <position position="164"/>
    </location>
    <ligand>
        <name>GTP</name>
        <dbReference type="ChEBI" id="CHEBI:37565"/>
    </ligand>
</feature>
<feature type="modified residue" description="Phosphoserine" evidence="1">
    <location>
        <position position="309"/>
    </location>
</feature>
<feature type="cross-link" description="Glycyl lysine isopeptide (Lys-Gly) (interchain with G-Cter in ubiquitin)" evidence="1">
    <location>
        <position position="142"/>
    </location>
</feature>
<feature type="cross-link" description="Glycyl lysine isopeptide (Lys-Gly) (interchain with G-Cter in ubiquitin)" evidence="1">
    <location>
        <position position="220"/>
    </location>
</feature>
<feature type="cross-link" description="Glycyl lysine isopeptide (Lys-Gly) (interchain with G-Cter in ubiquitin)" evidence="1">
    <location>
        <position position="230"/>
    </location>
</feature>
<feature type="cross-link" description="Glycyl lysine isopeptide (Lys-Gly) (interchain with G-Cter in ubiquitin)" evidence="1">
    <location>
        <position position="244"/>
    </location>
</feature>
<evidence type="ECO:0000250" key="1">
    <source>
        <dbReference type="UniProtKB" id="Q7L523"/>
    </source>
</evidence>
<evidence type="ECO:0000250" key="2">
    <source>
        <dbReference type="UniProtKB" id="Q80X95"/>
    </source>
</evidence>
<evidence type="ECO:0000305" key="3"/>
<comment type="function">
    <text evidence="1">Guanine nucleotide-binding protein that plays a crucial role in the cellular response to amino acid availability through regulation of the mTORC1 signaling cascade. Forms heterodimeric Rag complexes with RagC/RRAGC or RagD/RRAGD and cycles between an inactive GDP-bound and an active GTP-bound form: RagA/RRAGA is in its active form when GTP-bound RagA/RRAGA forms a complex with GDP-bound RagC/RRAGC (or RagD/RRAGD) and in an inactive form when GDP-bound RagA/RRAGA heterodimerizes with GTP-bound RagC/RRAGC (or RagD/RRAGD). In its GTP-bound active form, promotes the recruitment of mTORC1 to the lysosomes and its subsequent activation by the GTPase RHEB. Involved in the RCC1/Ran-GTPase pathway. May play a direct role in a TNF-alpha signaling pathway leading to induction of cell death.</text>
</comment>
<comment type="catalytic activity">
    <reaction evidence="1">
        <text>GTP + H2O = GDP + phosphate + H(+)</text>
        <dbReference type="Rhea" id="RHEA:19669"/>
        <dbReference type="ChEBI" id="CHEBI:15377"/>
        <dbReference type="ChEBI" id="CHEBI:15378"/>
        <dbReference type="ChEBI" id="CHEBI:37565"/>
        <dbReference type="ChEBI" id="CHEBI:43474"/>
        <dbReference type="ChEBI" id="CHEBI:58189"/>
    </reaction>
    <physiologicalReaction direction="left-to-right" evidence="1">
        <dbReference type="Rhea" id="RHEA:19670"/>
    </physiologicalReaction>
</comment>
<comment type="activity regulation">
    <text evidence="1">The activation of GTP-binding proteins is generally mediated by a guanine exchange factor (GEF), while inactivation through hydrolysis of bound GTP is catalyzed by a GTPase activating protein (GAP). The Ragulator complex functions as a GEF and promotes the active GTP-bound form. The GATOR1 complex functions as a GAP and stimulates RRAGA GTPase activity to turn it into its inactive GDP-bound form, preventing mTORC1 recruitment and activation.</text>
</comment>
<comment type="subunit">
    <text evidence="1 2">Can occur as a homodimer or as a heterodimer with RRAGC or RRAGD in a sequence-independent manner; heterodimerization stabilizes proteins of the heterodimer. The GTP-bound form of RRAGA (in complex with the GDP-bound form of RRAGC or RRAGD) interacts with RPTOR, thereby promoting recruitment of mTORC1 to the lysosomes. The Rag heterodimer interacts with SLC38A9; the probable amino acid sensor. The Rag heterodimer interacts with the Ragulator complex. The GTP-bound form of RRAGA interacts with NOL8. Component of the lysosomal folliculin complex (LFC), composed of FLCN, FNIP1 (or FNIP2), RagA/RRAGA or RagB/RRAGB GDP-bound, RagC/RRAGC or RagD/RRAGD GTP-bound, and Ragulator. Interacts with SH3BP4; the interaction with this negative regulator is most probably direct, preferentially occurs with the inactive GDP-bound form of RRAGA and is negatively regulated by amino acids. Interacts (polyubiquitinated) with TSC2. Interacts with SESN1, SESN2 and SESN3 (By similarity). Interacts with PIP4P1 (By similarity). Interacts with GPR137B (By similarity). Interacts with WDR83; this interaction regulates the spatiotemporal localization of mTORC1 to the lysosomal surface (By similarity).</text>
</comment>
<comment type="subcellular location">
    <subcellularLocation>
        <location evidence="1">Cytoplasm</location>
    </subcellularLocation>
    <subcellularLocation>
        <location evidence="1">Nucleus</location>
    </subcellularLocation>
    <subcellularLocation>
        <location evidence="1">Lysosome membrane</location>
    </subcellularLocation>
    <text evidence="1">Predominantly cytoplasmic. Recruited to the lysosome surface by the Ragulator complex. May shuttle between the cytoplasm and nucleus, depending on the bound nucleotide state.</text>
</comment>
<comment type="PTM">
    <text evidence="1">Polybiquitinated via 'Lys-63'-linked polyubiquitination by RNF152 in response to amino acid starvation: polyubiquitination of the GDP-bound inactive form by RNF152 promotes RRAGA inactivation and interaction with the GATOR1 complex. This does not affect RRAGA degradation.</text>
</comment>
<comment type="similarity">
    <text evidence="3">Belongs to the GTR/RAG GTP-binding protein family.</text>
</comment>
<dbReference type="EC" id="3.6.5.-" evidence="1"/>
<dbReference type="EMBL" id="BC104513">
    <property type="protein sequence ID" value="AAI04514.1"/>
    <property type="molecule type" value="mRNA"/>
</dbReference>
<dbReference type="RefSeq" id="NP_001030576.1">
    <property type="nucleotide sequence ID" value="NM_001035499.1"/>
</dbReference>
<dbReference type="SMR" id="Q3SX43"/>
<dbReference type="FunCoup" id="Q3SX43">
    <property type="interactions" value="3592"/>
</dbReference>
<dbReference type="STRING" id="9913.ENSBTAP00000051093"/>
<dbReference type="PaxDb" id="9913-ENSBTAP00000051093"/>
<dbReference type="Ensembl" id="ENSBTAT00000031476.5">
    <property type="protein sequence ID" value="ENSBTAP00000051093.1"/>
    <property type="gene ID" value="ENSBTAG00000033543.4"/>
</dbReference>
<dbReference type="GeneID" id="618207"/>
<dbReference type="KEGG" id="bta:618207"/>
<dbReference type="CTD" id="10670"/>
<dbReference type="VEuPathDB" id="HostDB:ENSBTAG00000033543"/>
<dbReference type="eggNOG" id="KOG3886">
    <property type="taxonomic scope" value="Eukaryota"/>
</dbReference>
<dbReference type="GeneTree" id="ENSGT00950000183031"/>
<dbReference type="HOGENOM" id="CLU_044099_1_0_1"/>
<dbReference type="InParanoid" id="Q3SX43"/>
<dbReference type="OMA" id="QQKDHIF"/>
<dbReference type="OrthoDB" id="10020193at2759"/>
<dbReference type="TreeFam" id="TF300616"/>
<dbReference type="Reactome" id="R-BTA-1632852">
    <property type="pathway name" value="Macroautophagy"/>
</dbReference>
<dbReference type="Reactome" id="R-BTA-165159">
    <property type="pathway name" value="MTOR signalling"/>
</dbReference>
<dbReference type="Reactome" id="R-BTA-166208">
    <property type="pathway name" value="mTORC1-mediated signalling"/>
</dbReference>
<dbReference type="Reactome" id="R-BTA-380972">
    <property type="pathway name" value="Energy dependent regulation of mTOR by LKB1-AMPK"/>
</dbReference>
<dbReference type="Reactome" id="R-BTA-5628897">
    <property type="pathway name" value="TP53 Regulates Metabolic Genes"/>
</dbReference>
<dbReference type="Reactome" id="R-BTA-8866654">
    <property type="pathway name" value="E3 ubiquitin ligases ubiquitinate target proteins"/>
</dbReference>
<dbReference type="Reactome" id="R-BTA-8943724">
    <property type="pathway name" value="Regulation of PTEN gene transcription"/>
</dbReference>
<dbReference type="Reactome" id="R-BTA-9639288">
    <property type="pathway name" value="Amino acids regulate mTORC1"/>
</dbReference>
<dbReference type="Proteomes" id="UP000009136">
    <property type="component" value="Chromosome 8"/>
</dbReference>
<dbReference type="Bgee" id="ENSBTAG00000033543">
    <property type="expression patterns" value="Expressed in adenohypophysis and 102 other cell types or tissues"/>
</dbReference>
<dbReference type="GO" id="GO:1990131">
    <property type="term" value="C:Gtr1-Gtr2 GTPase complex"/>
    <property type="evidence" value="ECO:0000318"/>
    <property type="project" value="GO_Central"/>
</dbReference>
<dbReference type="GO" id="GO:0005765">
    <property type="term" value="C:lysosomal membrane"/>
    <property type="evidence" value="ECO:0000250"/>
    <property type="project" value="UniProtKB"/>
</dbReference>
<dbReference type="GO" id="GO:0005764">
    <property type="term" value="C:lysosome"/>
    <property type="evidence" value="ECO:0000250"/>
    <property type="project" value="UniProtKB"/>
</dbReference>
<dbReference type="GO" id="GO:0005634">
    <property type="term" value="C:nucleus"/>
    <property type="evidence" value="ECO:0000318"/>
    <property type="project" value="GO_Central"/>
</dbReference>
<dbReference type="GO" id="GO:0005525">
    <property type="term" value="F:GTP binding"/>
    <property type="evidence" value="ECO:0000250"/>
    <property type="project" value="UniProtKB"/>
</dbReference>
<dbReference type="GO" id="GO:0003924">
    <property type="term" value="F:GTPase activity"/>
    <property type="evidence" value="ECO:0000250"/>
    <property type="project" value="UniProtKB"/>
</dbReference>
<dbReference type="GO" id="GO:0043495">
    <property type="term" value="F:protein-membrane adaptor activity"/>
    <property type="evidence" value="ECO:0000250"/>
    <property type="project" value="UniProtKB"/>
</dbReference>
<dbReference type="GO" id="GO:0006915">
    <property type="term" value="P:apoptotic process"/>
    <property type="evidence" value="ECO:0007669"/>
    <property type="project" value="UniProtKB-KW"/>
</dbReference>
<dbReference type="GO" id="GO:0034198">
    <property type="term" value="P:cellular response to amino acid starvation"/>
    <property type="evidence" value="ECO:0000250"/>
    <property type="project" value="UniProtKB"/>
</dbReference>
<dbReference type="GO" id="GO:0071230">
    <property type="term" value="P:cellular response to amino acid stimulus"/>
    <property type="evidence" value="ECO:0000250"/>
    <property type="project" value="UniProtKB"/>
</dbReference>
<dbReference type="GO" id="GO:0009267">
    <property type="term" value="P:cellular response to starvation"/>
    <property type="evidence" value="ECO:0000318"/>
    <property type="project" value="GO_Central"/>
</dbReference>
<dbReference type="GO" id="GO:0010507">
    <property type="term" value="P:negative regulation of autophagy"/>
    <property type="evidence" value="ECO:0000250"/>
    <property type="project" value="UniProtKB"/>
</dbReference>
<dbReference type="GO" id="GO:1904263">
    <property type="term" value="P:positive regulation of TORC1 signaling"/>
    <property type="evidence" value="ECO:0000250"/>
    <property type="project" value="UniProtKB"/>
</dbReference>
<dbReference type="GO" id="GO:0008104">
    <property type="term" value="P:protein localization"/>
    <property type="evidence" value="ECO:0000250"/>
    <property type="project" value="UniProtKB"/>
</dbReference>
<dbReference type="GO" id="GO:0072657">
    <property type="term" value="P:protein localization to membrane"/>
    <property type="evidence" value="ECO:0000250"/>
    <property type="project" value="UniProtKB"/>
</dbReference>
<dbReference type="GO" id="GO:1903432">
    <property type="term" value="P:regulation of TORC1 signaling"/>
    <property type="evidence" value="ECO:0000250"/>
    <property type="project" value="UniProtKB"/>
</dbReference>
<dbReference type="GO" id="GO:0043200">
    <property type="term" value="P:response to amino acid"/>
    <property type="evidence" value="ECO:0000250"/>
    <property type="project" value="UniProtKB"/>
</dbReference>
<dbReference type="CDD" id="cd11384">
    <property type="entry name" value="RagA_like"/>
    <property type="match status" value="1"/>
</dbReference>
<dbReference type="FunFam" id="3.30.450.190:FF:000002">
    <property type="entry name" value="Ras-related GTP-binding protein A"/>
    <property type="match status" value="1"/>
</dbReference>
<dbReference type="FunFam" id="3.40.50.300:FF:000276">
    <property type="entry name" value="Ras-related GTP-binding protein A"/>
    <property type="match status" value="1"/>
</dbReference>
<dbReference type="Gene3D" id="3.30.450.190">
    <property type="match status" value="1"/>
</dbReference>
<dbReference type="Gene3D" id="3.40.50.300">
    <property type="entry name" value="P-loop containing nucleotide triphosphate hydrolases"/>
    <property type="match status" value="1"/>
</dbReference>
<dbReference type="InterPro" id="IPR006762">
    <property type="entry name" value="Gtr1_RagA"/>
</dbReference>
<dbReference type="InterPro" id="IPR027417">
    <property type="entry name" value="P-loop_NTPase"/>
</dbReference>
<dbReference type="InterPro" id="IPR039397">
    <property type="entry name" value="RagA/B"/>
</dbReference>
<dbReference type="PANTHER" id="PTHR11259">
    <property type="entry name" value="RAS-RELATED GTP BINDING RAG/GTR YEAST"/>
    <property type="match status" value="1"/>
</dbReference>
<dbReference type="PANTHER" id="PTHR11259:SF7">
    <property type="entry name" value="RAS-RELATED GTP-BINDING PROTEIN A"/>
    <property type="match status" value="1"/>
</dbReference>
<dbReference type="Pfam" id="PF04670">
    <property type="entry name" value="Gtr1_RagA"/>
    <property type="match status" value="1"/>
</dbReference>
<dbReference type="SUPFAM" id="SSF52540">
    <property type="entry name" value="P-loop containing nucleoside triphosphate hydrolases"/>
    <property type="match status" value="1"/>
</dbReference>